<name>CATC_CANLF</name>
<feature type="chain" id="PRO_0000026331" description="Dipeptidyl peptidase 1 exclusion domain chain" evidence="1">
    <location>
        <begin position="1"/>
        <end position="109"/>
    </location>
</feature>
<feature type="propeptide" id="PRO_0000026332" evidence="1">
    <location>
        <begin position="110"/>
        <end position="199"/>
    </location>
</feature>
<feature type="chain" id="PRO_0000026333" description="Dipeptidyl peptidase 1 heavy chain 1">
    <location>
        <begin position="200"/>
        <end position="366"/>
    </location>
</feature>
<feature type="chain" id="PRO_0000026334" description="Dipeptidyl peptidase 1 heavy chain 2">
    <location>
        <begin position="201"/>
        <end position="366"/>
    </location>
</feature>
<feature type="chain" id="PRO_0000026335" description="Dipeptidyl peptidase 1 heavy chain 3">
    <location>
        <begin position="203"/>
        <end position="366"/>
    </location>
</feature>
<feature type="chain" id="PRO_0000026336" description="Dipeptidyl peptidase 1 heavy chain 4">
    <location>
        <begin position="204"/>
        <end position="366"/>
    </location>
</feature>
<feature type="chain" id="PRO_0000026337" description="Dipeptidyl peptidase 1 light chain">
    <location>
        <begin position="367"/>
        <end position="435"/>
    </location>
</feature>
<feature type="active site" evidence="3">
    <location>
        <position position="231"/>
    </location>
</feature>
<feature type="active site" evidence="4">
    <location>
        <position position="377"/>
    </location>
</feature>
<feature type="active site" evidence="5">
    <location>
        <position position="399"/>
    </location>
</feature>
<feature type="binding site" evidence="1">
    <location>
        <position position="275"/>
    </location>
    <ligand>
        <name>chloride</name>
        <dbReference type="ChEBI" id="CHEBI:17996"/>
    </ligand>
</feature>
<feature type="binding site" evidence="1">
    <location>
        <position position="277"/>
    </location>
    <ligand>
        <name>chloride</name>
        <dbReference type="ChEBI" id="CHEBI:17996"/>
    </ligand>
</feature>
<feature type="binding site" evidence="1">
    <location>
        <position position="319"/>
    </location>
    <ligand>
        <name>chloride</name>
        <dbReference type="ChEBI" id="CHEBI:17996"/>
    </ligand>
</feature>
<feature type="glycosylation site" description="N-linked (GlcNAc...) asparagine" evidence="2">
    <location>
        <position position="5"/>
    </location>
</feature>
<feature type="glycosylation site" description="N-linked (GlcNAc...) asparagine" evidence="2">
    <location>
        <position position="28"/>
    </location>
</feature>
<feature type="glycosylation site" description="N-linked (GlcNAc...) asparagine" evidence="2">
    <location>
        <position position="94"/>
    </location>
</feature>
<feature type="glycosylation site" description="N-linked (GlcNAc...) asparagine" evidence="2">
    <location>
        <position position="249"/>
    </location>
</feature>
<feature type="disulfide bond" evidence="1">
    <location>
        <begin position="6"/>
        <end position="93"/>
    </location>
</feature>
<feature type="disulfide bond" evidence="1">
    <location>
        <begin position="29"/>
        <end position="111"/>
    </location>
</feature>
<feature type="disulfide bond" evidence="1">
    <location>
        <begin position="228"/>
        <end position="271"/>
    </location>
</feature>
<feature type="disulfide bond" evidence="1">
    <location>
        <begin position="264"/>
        <end position="304"/>
    </location>
</feature>
<feature type="disulfide bond" evidence="1">
    <location>
        <begin position="294"/>
        <end position="309"/>
    </location>
</feature>
<feature type="non-terminal residue">
    <location>
        <position position="1"/>
    </location>
</feature>
<evidence type="ECO:0000250" key="1">
    <source>
        <dbReference type="UniProtKB" id="P53634"/>
    </source>
</evidence>
<evidence type="ECO:0000255" key="2"/>
<evidence type="ECO:0000255" key="3">
    <source>
        <dbReference type="PROSITE-ProRule" id="PRU10088"/>
    </source>
</evidence>
<evidence type="ECO:0000255" key="4">
    <source>
        <dbReference type="PROSITE-ProRule" id="PRU10089"/>
    </source>
</evidence>
<evidence type="ECO:0000255" key="5">
    <source>
        <dbReference type="PROSITE-ProRule" id="PRU10090"/>
    </source>
</evidence>
<comment type="function">
    <text evidence="1">Thiol protease. Has dipeptidylpeptidase activity. Active against a broad range of dipeptide substrates composed of both polar and hydrophobic amino acids. Proline cannot occupy the P1 position and arginine cannot occupy the P2 position of the substrate. Can act as both an exopeptidase and endopeptidase. Activates serine proteases such as elastase, cathepsin G and granzymes A and B.</text>
</comment>
<comment type="catalytic activity">
    <reaction evidence="1">
        <text>Release of an N-terminal dipeptide, Xaa-Yaa-|-Zaa-, except when Xaa is Arg or Lys, or Yaa or Zaa is Pro.</text>
        <dbReference type="EC" id="3.4.14.1"/>
    </reaction>
</comment>
<comment type="cofactor">
    <cofactor evidence="1">
        <name>chloride</name>
        <dbReference type="ChEBI" id="CHEBI:17996"/>
    </cofactor>
    <text evidence="1">Binds 1 Cl(-) ion per heavy chain.</text>
</comment>
<comment type="biophysicochemical properties">
    <phDependence>
        <text>Optimum pH is 6.5. Active over a broad pH range.</text>
    </phDependence>
</comment>
<comment type="subunit">
    <text evidence="1">Tetramer of heterotrimers consisting of exclusion domain, heavy- and light chains.</text>
</comment>
<comment type="subcellular location">
    <subcellularLocation>
        <location evidence="1">Lysosome</location>
    </subcellularLocation>
</comment>
<comment type="PTM">
    <text>The N-terminus of the heavy chain is heterogeneously processed to produce four different chains.</text>
</comment>
<comment type="similarity">
    <text evidence="3 4 5">Belongs to the peptidase C1 family.</text>
</comment>
<sequence length="435" mass="49412">DTPANCTHPELLGTWVFQVGPAGSRSVNCSVMGPPEKKVVVHLEKLDTAYDNFGNTGHFTIIYNQGFEIVLNDYKWFAFFKYKEEGHKVTSYCNETMTGWVHDVLGRNWACFTGTKMGTTSEKAKVNTKHIERLQENNSNRLYKYNYEFVKAINTIQKSWTATRYIEYETLTLRDMMTRVGGRKIPRPKPTPLTAEIHEEISRLPTSWDWRNVRGTNFVSPVRNQASCGSCYAFASTAMLEARIRILTNNTQTPILSPQEIVSCSQYAQGCEGGFPYLIAGKYAQDFGLVEEACFPYAGSDSPCKPNDCFRYYSSEYYYVGGFYGACNEALMKLELVRHGPMAVAFEVYDDFFHYQKGIYYHTGLRDPFNPFELTNHAVLLVGYGTDSASGMDYWIVKNSWGSRWGEDGYFRIRRGTDECAIESIAVAATPIPKL</sequence>
<reference key="1">
    <citation type="journal article" date="1998" name="J. Biol. Chem.">
        <title>Regulated expression, processing, and secretion of dog mast cell dipeptidyl peptidase I.</title>
        <authorList>
            <person name="Wolters P.J."/>
            <person name="Raymond W.W."/>
            <person name="Blount J.L."/>
            <person name="Caughey G.H."/>
        </authorList>
    </citation>
    <scope>NUCLEOTIDE SEQUENCE [MRNA]</scope>
    <scope>PROTEIN SEQUENCE OF 1-8 AND 199-208</scope>
    <source>
        <tissue>Mast cell</tissue>
    </source>
</reference>
<proteinExistence type="evidence at protein level"/>
<protein>
    <recommendedName>
        <fullName>Dipeptidyl peptidase 1</fullName>
        <ecNumber>3.4.14.1</ecNumber>
    </recommendedName>
    <alternativeName>
        <fullName>Cathepsin C</fullName>
    </alternativeName>
    <alternativeName>
        <fullName>Cathepsin J</fullName>
    </alternativeName>
    <alternativeName>
        <fullName>Dipeptidyl peptidase I</fullName>
        <shortName>DPP-I</shortName>
        <shortName>DPPI</shortName>
    </alternativeName>
    <alternativeName>
        <fullName>Dipeptidyl transferase</fullName>
    </alternativeName>
    <component>
        <recommendedName>
            <fullName>Dipeptidyl peptidase 1 exclusion domain chain</fullName>
        </recommendedName>
        <alternativeName>
            <fullName>Dipeptidyl peptidase I exclusion domain chain</fullName>
        </alternativeName>
    </component>
    <component>
        <recommendedName>
            <fullName>Dipeptidyl peptidase 1 heavy chain 1</fullName>
        </recommendedName>
        <alternativeName>
            <fullName>Dipeptidyl peptidase I heavy chain 1</fullName>
        </alternativeName>
    </component>
    <component>
        <recommendedName>
            <fullName>Dipeptidyl peptidase 1 heavy chain 2</fullName>
        </recommendedName>
        <alternativeName>
            <fullName>Dipeptidyl peptidase I heavy chain 2</fullName>
        </alternativeName>
    </component>
    <component>
        <recommendedName>
            <fullName>Dipeptidyl peptidase 1 heavy chain 3</fullName>
        </recommendedName>
        <alternativeName>
            <fullName>Dipeptidyl peptidase I heavy chain 3</fullName>
        </alternativeName>
    </component>
    <component>
        <recommendedName>
            <fullName>Dipeptidyl peptidase 1 heavy chain 4</fullName>
        </recommendedName>
        <alternativeName>
            <fullName>Dipeptidyl peptidase I heavy chain 4</fullName>
        </alternativeName>
    </component>
    <component>
        <recommendedName>
            <fullName>Dipeptidyl peptidase 1 light chain</fullName>
        </recommendedName>
        <alternativeName>
            <fullName>Dipeptidyl peptidase I light chain</fullName>
        </alternativeName>
    </component>
</protein>
<keyword id="KW-0868">Chloride</keyword>
<keyword id="KW-0903">Direct protein sequencing</keyword>
<keyword id="KW-1015">Disulfide bond</keyword>
<keyword id="KW-0325">Glycoprotein</keyword>
<keyword id="KW-0378">Hydrolase</keyword>
<keyword id="KW-0458">Lysosome</keyword>
<keyword id="KW-0645">Protease</keyword>
<keyword id="KW-1185">Reference proteome</keyword>
<keyword id="KW-0788">Thiol protease</keyword>
<keyword id="KW-0865">Zymogen</keyword>
<gene>
    <name type="primary">CTSC</name>
</gene>
<organism>
    <name type="scientific">Canis lupus familiaris</name>
    <name type="common">Dog</name>
    <name type="synonym">Canis familiaris</name>
    <dbReference type="NCBI Taxonomy" id="9615"/>
    <lineage>
        <taxon>Eukaryota</taxon>
        <taxon>Metazoa</taxon>
        <taxon>Chordata</taxon>
        <taxon>Craniata</taxon>
        <taxon>Vertebrata</taxon>
        <taxon>Euteleostomi</taxon>
        <taxon>Mammalia</taxon>
        <taxon>Eutheria</taxon>
        <taxon>Laurasiatheria</taxon>
        <taxon>Carnivora</taxon>
        <taxon>Caniformia</taxon>
        <taxon>Canidae</taxon>
        <taxon>Canis</taxon>
    </lineage>
</organism>
<accession>O97578</accession>
<dbReference type="EC" id="3.4.14.1"/>
<dbReference type="EMBL" id="AF060171">
    <property type="protein sequence ID" value="AAD02704.1"/>
    <property type="molecule type" value="mRNA"/>
</dbReference>
<dbReference type="RefSeq" id="NP_001182763.1">
    <property type="nucleotide sequence ID" value="NM_001195834.1"/>
</dbReference>
<dbReference type="SMR" id="O97578"/>
<dbReference type="FunCoup" id="O97578">
    <property type="interactions" value="222"/>
</dbReference>
<dbReference type="STRING" id="9615.ENSCAFP00000006531"/>
<dbReference type="BindingDB" id="O97578"/>
<dbReference type="ChEMBL" id="CHEMBL3879833"/>
<dbReference type="MEROPS" id="C01.070"/>
<dbReference type="GlyCosmos" id="O97578">
    <property type="glycosylation" value="4 sites, No reported glycans"/>
</dbReference>
<dbReference type="PaxDb" id="9612-ENSCAFP00000037626"/>
<dbReference type="GeneID" id="403458"/>
<dbReference type="KEGG" id="cfa:403458"/>
<dbReference type="CTD" id="1075"/>
<dbReference type="eggNOG" id="KOG1543">
    <property type="taxonomic scope" value="Eukaryota"/>
</dbReference>
<dbReference type="InParanoid" id="O97578"/>
<dbReference type="OrthoDB" id="3789175at2759"/>
<dbReference type="Proteomes" id="UP000002254">
    <property type="component" value="Unplaced"/>
</dbReference>
<dbReference type="Proteomes" id="UP000694429">
    <property type="component" value="Unplaced"/>
</dbReference>
<dbReference type="Proteomes" id="UP000694542">
    <property type="component" value="Unplaced"/>
</dbReference>
<dbReference type="Proteomes" id="UP000805418">
    <property type="component" value="Unplaced"/>
</dbReference>
<dbReference type="GO" id="GO:0005615">
    <property type="term" value="C:extracellular space"/>
    <property type="evidence" value="ECO:0000318"/>
    <property type="project" value="GO_Central"/>
</dbReference>
<dbReference type="GO" id="GO:0005764">
    <property type="term" value="C:lysosome"/>
    <property type="evidence" value="ECO:0000318"/>
    <property type="project" value="GO_Central"/>
</dbReference>
<dbReference type="GO" id="GO:0004197">
    <property type="term" value="F:cysteine-type endopeptidase activity"/>
    <property type="evidence" value="ECO:0000318"/>
    <property type="project" value="GO_Central"/>
</dbReference>
<dbReference type="GO" id="GO:0008239">
    <property type="term" value="F:dipeptidyl-peptidase activity"/>
    <property type="evidence" value="ECO:0007669"/>
    <property type="project" value="UniProtKB-EC"/>
</dbReference>
<dbReference type="GO" id="GO:0051603">
    <property type="term" value="P:proteolysis involved in protein catabolic process"/>
    <property type="evidence" value="ECO:0000318"/>
    <property type="project" value="GO_Central"/>
</dbReference>
<dbReference type="CDD" id="cd02621">
    <property type="entry name" value="Peptidase_C1A_CathepsinC"/>
    <property type="match status" value="1"/>
</dbReference>
<dbReference type="FunFam" id="2.40.128.80:FF:000001">
    <property type="entry name" value="Dipeptidyl peptidase 1"/>
    <property type="match status" value="1"/>
</dbReference>
<dbReference type="FunFam" id="3.90.70.10:FF:000062">
    <property type="entry name" value="Dipeptidyl peptidase 1"/>
    <property type="match status" value="1"/>
</dbReference>
<dbReference type="Gene3D" id="2.40.128.80">
    <property type="entry name" value="Cathepsin C, exclusion domain"/>
    <property type="match status" value="1"/>
</dbReference>
<dbReference type="Gene3D" id="3.90.70.10">
    <property type="entry name" value="Cysteine proteinases"/>
    <property type="match status" value="1"/>
</dbReference>
<dbReference type="InterPro" id="IPR039412">
    <property type="entry name" value="CatC"/>
</dbReference>
<dbReference type="InterPro" id="IPR014882">
    <property type="entry name" value="CathepsinC_exc"/>
</dbReference>
<dbReference type="InterPro" id="IPR036496">
    <property type="entry name" value="CathepsinC_exc_dom_sf"/>
</dbReference>
<dbReference type="InterPro" id="IPR038765">
    <property type="entry name" value="Papain-like_cys_pep_sf"/>
</dbReference>
<dbReference type="InterPro" id="IPR025661">
    <property type="entry name" value="Pept_asp_AS"/>
</dbReference>
<dbReference type="InterPro" id="IPR000169">
    <property type="entry name" value="Pept_cys_AS"/>
</dbReference>
<dbReference type="InterPro" id="IPR025660">
    <property type="entry name" value="Pept_his_AS"/>
</dbReference>
<dbReference type="InterPro" id="IPR013128">
    <property type="entry name" value="Peptidase_C1A"/>
</dbReference>
<dbReference type="InterPro" id="IPR000668">
    <property type="entry name" value="Peptidase_C1A_C"/>
</dbReference>
<dbReference type="PANTHER" id="PTHR12411">
    <property type="entry name" value="CYSTEINE PROTEASE FAMILY C1-RELATED"/>
    <property type="match status" value="1"/>
</dbReference>
<dbReference type="Pfam" id="PF08773">
    <property type="entry name" value="CathepsinC_exc"/>
    <property type="match status" value="1"/>
</dbReference>
<dbReference type="Pfam" id="PF00112">
    <property type="entry name" value="Peptidase_C1"/>
    <property type="match status" value="1"/>
</dbReference>
<dbReference type="PRINTS" id="PR00705">
    <property type="entry name" value="PAPAIN"/>
</dbReference>
<dbReference type="SMART" id="SM00645">
    <property type="entry name" value="Pept_C1"/>
    <property type="match status" value="1"/>
</dbReference>
<dbReference type="SUPFAM" id="SSF54001">
    <property type="entry name" value="Cysteine proteinases"/>
    <property type="match status" value="1"/>
</dbReference>
<dbReference type="SUPFAM" id="SSF75001">
    <property type="entry name" value="Dipeptidyl peptidase I (cathepsin C), exclusion domain"/>
    <property type="match status" value="1"/>
</dbReference>
<dbReference type="PROSITE" id="PS00640">
    <property type="entry name" value="THIOL_PROTEASE_ASN"/>
    <property type="match status" value="1"/>
</dbReference>
<dbReference type="PROSITE" id="PS00139">
    <property type="entry name" value="THIOL_PROTEASE_CYS"/>
    <property type="match status" value="1"/>
</dbReference>
<dbReference type="PROSITE" id="PS00639">
    <property type="entry name" value="THIOL_PROTEASE_HIS"/>
    <property type="match status" value="1"/>
</dbReference>